<dbReference type="EC" id="1.10.3.9" evidence="1"/>
<dbReference type="EMBL" id="CP000110">
    <property type="protein sequence ID" value="ABB35733.1"/>
    <property type="molecule type" value="Genomic_DNA"/>
</dbReference>
<dbReference type="EMBL" id="CP000110">
    <property type="protein sequence ID" value="ABB36107.1"/>
    <property type="molecule type" value="Genomic_DNA"/>
</dbReference>
<dbReference type="SMR" id="Q3AH25"/>
<dbReference type="STRING" id="110662.Syncc9605_1992"/>
<dbReference type="KEGG" id="syd:Syncc9605_1992"/>
<dbReference type="KEGG" id="syd:Syncc9605_2375"/>
<dbReference type="eggNOG" id="ENOG502Z8JK">
    <property type="taxonomic scope" value="Bacteria"/>
</dbReference>
<dbReference type="HOGENOM" id="CLU_077965_0_0_3"/>
<dbReference type="OrthoDB" id="505356at2"/>
<dbReference type="GO" id="GO:0009523">
    <property type="term" value="C:photosystem II"/>
    <property type="evidence" value="ECO:0007669"/>
    <property type="project" value="UniProtKB-KW"/>
</dbReference>
<dbReference type="GO" id="GO:0031676">
    <property type="term" value="C:plasma membrane-derived thylakoid membrane"/>
    <property type="evidence" value="ECO:0007669"/>
    <property type="project" value="UniProtKB-SubCell"/>
</dbReference>
<dbReference type="GO" id="GO:0016168">
    <property type="term" value="F:chlorophyll binding"/>
    <property type="evidence" value="ECO:0007669"/>
    <property type="project" value="UniProtKB-UniRule"/>
</dbReference>
<dbReference type="GO" id="GO:0045156">
    <property type="term" value="F:electron transporter, transferring electrons within the cyclic electron transport pathway of photosynthesis activity"/>
    <property type="evidence" value="ECO:0007669"/>
    <property type="project" value="InterPro"/>
</dbReference>
<dbReference type="GO" id="GO:0005506">
    <property type="term" value="F:iron ion binding"/>
    <property type="evidence" value="ECO:0007669"/>
    <property type="project" value="UniProtKB-UniRule"/>
</dbReference>
<dbReference type="GO" id="GO:0010242">
    <property type="term" value="F:oxygen evolving activity"/>
    <property type="evidence" value="ECO:0007669"/>
    <property type="project" value="UniProtKB-EC"/>
</dbReference>
<dbReference type="GO" id="GO:0009772">
    <property type="term" value="P:photosynthetic electron transport in photosystem II"/>
    <property type="evidence" value="ECO:0007669"/>
    <property type="project" value="InterPro"/>
</dbReference>
<dbReference type="FunFam" id="1.20.85.10:FF:000001">
    <property type="entry name" value="photosystem II D2 protein-like"/>
    <property type="match status" value="1"/>
</dbReference>
<dbReference type="Gene3D" id="1.20.85.10">
    <property type="entry name" value="Photosystem II protein D1-like"/>
    <property type="match status" value="1"/>
</dbReference>
<dbReference type="HAMAP" id="MF_01383">
    <property type="entry name" value="PSII_PsbD_D2"/>
    <property type="match status" value="1"/>
</dbReference>
<dbReference type="InterPro" id="IPR055266">
    <property type="entry name" value="D1/D2"/>
</dbReference>
<dbReference type="InterPro" id="IPR036854">
    <property type="entry name" value="Photo_II_D1/D2_sf"/>
</dbReference>
<dbReference type="InterPro" id="IPR000484">
    <property type="entry name" value="Photo_RC_L/M"/>
</dbReference>
<dbReference type="InterPro" id="IPR055265">
    <property type="entry name" value="Photo_RC_L/M_CS"/>
</dbReference>
<dbReference type="InterPro" id="IPR005868">
    <property type="entry name" value="PSII_PsbD/D2"/>
</dbReference>
<dbReference type="NCBIfam" id="TIGR01152">
    <property type="entry name" value="psbD"/>
    <property type="match status" value="1"/>
</dbReference>
<dbReference type="PANTHER" id="PTHR33149:SF12">
    <property type="entry name" value="PHOTOSYSTEM II D2 PROTEIN"/>
    <property type="match status" value="1"/>
</dbReference>
<dbReference type="PANTHER" id="PTHR33149">
    <property type="entry name" value="PHOTOSYSTEM II PROTEIN D1"/>
    <property type="match status" value="1"/>
</dbReference>
<dbReference type="Pfam" id="PF00124">
    <property type="entry name" value="Photo_RC"/>
    <property type="match status" value="1"/>
</dbReference>
<dbReference type="PRINTS" id="PR00256">
    <property type="entry name" value="REACTNCENTRE"/>
</dbReference>
<dbReference type="SUPFAM" id="SSF81483">
    <property type="entry name" value="Bacterial photosystem II reaction centre, L and M subunits"/>
    <property type="match status" value="1"/>
</dbReference>
<dbReference type="PROSITE" id="PS00244">
    <property type="entry name" value="REACTION_CENTER"/>
    <property type="match status" value="1"/>
</dbReference>
<organism>
    <name type="scientific">Synechococcus sp. (strain CC9605)</name>
    <dbReference type="NCBI Taxonomy" id="110662"/>
    <lineage>
        <taxon>Bacteria</taxon>
        <taxon>Bacillati</taxon>
        <taxon>Cyanobacteriota</taxon>
        <taxon>Cyanophyceae</taxon>
        <taxon>Synechococcales</taxon>
        <taxon>Synechococcaceae</taxon>
        <taxon>Synechococcus</taxon>
    </lineage>
</organism>
<feature type="chain" id="PRO_0000359607" description="Photosystem II D2 protein">
    <location>
        <begin position="1"/>
        <end position="351"/>
    </location>
</feature>
<feature type="transmembrane region" description="Helical" evidence="1">
    <location>
        <begin position="39"/>
        <end position="59"/>
    </location>
</feature>
<feature type="transmembrane region" description="Helical" evidence="1">
    <location>
        <begin position="123"/>
        <end position="139"/>
    </location>
</feature>
<feature type="transmembrane region" description="Helical" evidence="1">
    <location>
        <begin position="151"/>
        <end position="164"/>
    </location>
</feature>
<feature type="transmembrane region" description="Helical" evidence="1">
    <location>
        <begin position="206"/>
        <end position="226"/>
    </location>
</feature>
<feature type="transmembrane region" description="Helical" evidence="1">
    <location>
        <begin position="277"/>
        <end position="293"/>
    </location>
</feature>
<feature type="binding site" description="axial binding residue" evidence="1">
    <location>
        <position position="116"/>
    </location>
    <ligand>
        <name>chlorophyll a</name>
        <dbReference type="ChEBI" id="CHEBI:58416"/>
        <label>ChlzD2</label>
    </ligand>
    <ligandPart>
        <name>Mg</name>
        <dbReference type="ChEBI" id="CHEBI:25107"/>
    </ligandPart>
</feature>
<feature type="binding site" evidence="1">
    <location>
        <position position="128"/>
    </location>
    <ligand>
        <name>pheophytin a</name>
        <dbReference type="ChEBI" id="CHEBI:136840"/>
        <label>D2</label>
    </ligand>
</feature>
<feature type="binding site" evidence="1">
    <location>
        <position position="141"/>
    </location>
    <ligand>
        <name>pheophytin a</name>
        <dbReference type="ChEBI" id="CHEBI:136840"/>
        <label>D2</label>
    </ligand>
</feature>
<feature type="binding site" description="axial binding residue" evidence="1">
    <location>
        <position position="196"/>
    </location>
    <ligand>
        <name>chlorophyll a</name>
        <dbReference type="ChEBI" id="CHEBI:58416"/>
        <label>PD2</label>
    </ligand>
    <ligandPart>
        <name>Mg</name>
        <dbReference type="ChEBI" id="CHEBI:25107"/>
    </ligandPart>
</feature>
<feature type="binding site" evidence="1">
    <location>
        <position position="213"/>
    </location>
    <ligand>
        <name>a plastoquinone</name>
        <dbReference type="ChEBI" id="CHEBI:17757"/>
        <label>Q(A)</label>
    </ligand>
</feature>
<feature type="binding site" evidence="1">
    <location>
        <position position="213"/>
    </location>
    <ligand>
        <name>Fe cation</name>
        <dbReference type="ChEBI" id="CHEBI:24875"/>
        <note>ligand shared with heterodimeric partner</note>
    </ligand>
</feature>
<feature type="binding site" evidence="1">
    <location>
        <position position="260"/>
    </location>
    <ligand>
        <name>a plastoquinone</name>
        <dbReference type="ChEBI" id="CHEBI:17757"/>
        <label>Q(A)</label>
    </ligand>
</feature>
<feature type="binding site" evidence="1">
    <location>
        <position position="267"/>
    </location>
    <ligand>
        <name>Fe cation</name>
        <dbReference type="ChEBI" id="CHEBI:24875"/>
        <note>ligand shared with heterodimeric partner</note>
    </ligand>
</feature>
<sequence>MTIAVGRAPQRGWFDVLDDWLKRDRFVFVGWSGILLLPTAYLAIGGWLTGTTFVTSWYTHGIASSYLEGCNFLTAAVSTPADAMGHSLLLLWGPEAQGDFVRWCQLGGLWAFVALHGAFALIGFMLRQFEIARLVGIRPYNAIAFSGPIAVFVSVFLMYPLGQSSWFFAPSFGVAAIFRFLLFLQGFHNWTLNPFHMMGVAGILGGALLCAIHGATVENTLFEDGEQANTFKAFEPTQEEETYSMVTANRFWSQIFGIAFSNKRWLHFFMLFVPVMGLWTSSIGIIGLALNLRAYDFVSQEIRAAEDPEFETFYTKNILLNEGLRAWMAPADQPHENFVFPEEVLPRGNAL</sequence>
<proteinExistence type="inferred from homology"/>
<name>PSBD_SYNSC</name>
<keyword id="KW-0148">Chlorophyll</keyword>
<keyword id="KW-0157">Chromophore</keyword>
<keyword id="KW-0249">Electron transport</keyword>
<keyword id="KW-0408">Iron</keyword>
<keyword id="KW-0460">Magnesium</keyword>
<keyword id="KW-0472">Membrane</keyword>
<keyword id="KW-0479">Metal-binding</keyword>
<keyword id="KW-0560">Oxidoreductase</keyword>
<keyword id="KW-0602">Photosynthesis</keyword>
<keyword id="KW-0604">Photosystem II</keyword>
<keyword id="KW-0793">Thylakoid</keyword>
<keyword id="KW-0812">Transmembrane</keyword>
<keyword id="KW-1133">Transmembrane helix</keyword>
<keyword id="KW-0813">Transport</keyword>
<protein>
    <recommendedName>
        <fullName evidence="1">Photosystem II D2 protein</fullName>
        <shortName evidence="1">PSII D2 protein</shortName>
        <ecNumber evidence="1">1.10.3.9</ecNumber>
    </recommendedName>
    <alternativeName>
        <fullName evidence="1">Photosystem Q(A) protein</fullName>
    </alternativeName>
</protein>
<reference key="1">
    <citation type="submission" date="2005-07" db="EMBL/GenBank/DDBJ databases">
        <title>Complete sequence of Synechococcus sp. CC9605.</title>
        <authorList>
            <consortium name="US DOE Joint Genome Institute"/>
            <person name="Copeland A."/>
            <person name="Lucas S."/>
            <person name="Lapidus A."/>
            <person name="Barry K."/>
            <person name="Detter J.C."/>
            <person name="Glavina T."/>
            <person name="Hammon N."/>
            <person name="Israni S."/>
            <person name="Pitluck S."/>
            <person name="Schmutz J."/>
            <person name="Martinez M."/>
            <person name="Larimer F."/>
            <person name="Land M."/>
            <person name="Kyrpides N."/>
            <person name="Ivanova N."/>
            <person name="Richardson P."/>
        </authorList>
    </citation>
    <scope>NUCLEOTIDE SEQUENCE [LARGE SCALE GENOMIC DNA]</scope>
    <source>
        <strain>CC9605</strain>
    </source>
</reference>
<comment type="function">
    <text evidence="1">Photosystem II (PSII) is a light-driven water:plastoquinone oxidoreductase that uses light energy to abstract electrons from H(2)O, generating O(2) and a proton gradient subsequently used for ATP formation. It consists of a core antenna complex that captures photons, and an electron transfer chain that converts photonic excitation into a charge separation. The D1/D2 (PsbA/PsbD) reaction center heterodimer binds P680, the primary electron donor of PSII as well as several subsequent electron acceptors. D2 is needed for assembly of a stable PSII complex.</text>
</comment>
<comment type="catalytic activity">
    <reaction evidence="1">
        <text>2 a plastoquinone + 4 hnu + 2 H2O = 2 a plastoquinol + O2</text>
        <dbReference type="Rhea" id="RHEA:36359"/>
        <dbReference type="Rhea" id="RHEA-COMP:9561"/>
        <dbReference type="Rhea" id="RHEA-COMP:9562"/>
        <dbReference type="ChEBI" id="CHEBI:15377"/>
        <dbReference type="ChEBI" id="CHEBI:15379"/>
        <dbReference type="ChEBI" id="CHEBI:17757"/>
        <dbReference type="ChEBI" id="CHEBI:30212"/>
        <dbReference type="ChEBI" id="CHEBI:62192"/>
        <dbReference type="EC" id="1.10.3.9"/>
    </reaction>
</comment>
<comment type="cofactor">
    <text evidence="1">The D1/D2 heterodimer binds P680, chlorophylls that are the primary electron donor of PSII, and subsequent electron acceptors. It shares a non-heme iron and each subunit binds pheophytin, quinone, additional chlorophylls, carotenoids and lipids. There is also a Cl(-1) ion associated with D1 and D2, which is required for oxygen evolution. The PSII complex binds additional chlorophylls, carotenoids and specific lipids.</text>
</comment>
<comment type="subunit">
    <text evidence="1">PSII is composed of 1 copy each of membrane proteins PsbA, PsbB, PsbC, PsbD, PsbE, PsbF, PsbH, PsbI, PsbJ, PsbK, PsbL, PsbM, PsbT, PsbX, PsbY, PsbZ, Psb30/Ycf12, peripheral proteins PsbO, CyanoQ (PsbQ), PsbU, PsbV and a large number of cofactors. It forms dimeric complexes.</text>
</comment>
<comment type="subcellular location">
    <subcellularLocation>
        <location evidence="1">Cellular thylakoid membrane</location>
        <topology evidence="1">Multi-pass membrane protein</topology>
    </subcellularLocation>
</comment>
<comment type="miscellaneous">
    <text evidence="1">2 of the reaction center chlorophylls (ChlD1 and ChlD2) are entirely coordinated by water.</text>
</comment>
<comment type="similarity">
    <text evidence="1">Belongs to the reaction center PufL/M/PsbA/D family.</text>
</comment>
<evidence type="ECO:0000255" key="1">
    <source>
        <dbReference type="HAMAP-Rule" id="MF_01383"/>
    </source>
</evidence>
<accession>Q3AH25</accession>
<gene>
    <name evidence="1" type="primary">psbD1</name>
    <name type="ordered locus">Syncc9605_1992</name>
</gene>
<gene>
    <name evidence="1" type="primary">psbD2</name>
    <name type="ordered locus">Syncc9605_2375</name>
</gene>